<organism>
    <name type="scientific">Nitrosococcus oceani (strain ATCC 19707 / BCRC 17464 / JCM 30415 / NCIMB 11848 / C-107)</name>
    <dbReference type="NCBI Taxonomy" id="323261"/>
    <lineage>
        <taxon>Bacteria</taxon>
        <taxon>Pseudomonadati</taxon>
        <taxon>Pseudomonadota</taxon>
        <taxon>Gammaproteobacteria</taxon>
        <taxon>Chromatiales</taxon>
        <taxon>Chromatiaceae</taxon>
        <taxon>Nitrosococcus</taxon>
    </lineage>
</organism>
<proteinExistence type="inferred from homology"/>
<comment type="function">
    <text evidence="1">Catalyzes the phosphorylation of pantothenate (Pan), the first step in CoA biosynthesis.</text>
</comment>
<comment type="catalytic activity">
    <reaction evidence="1">
        <text>(R)-pantothenate + ATP = (R)-4'-phosphopantothenate + ADP + H(+)</text>
        <dbReference type="Rhea" id="RHEA:16373"/>
        <dbReference type="ChEBI" id="CHEBI:10986"/>
        <dbReference type="ChEBI" id="CHEBI:15378"/>
        <dbReference type="ChEBI" id="CHEBI:29032"/>
        <dbReference type="ChEBI" id="CHEBI:30616"/>
        <dbReference type="ChEBI" id="CHEBI:456216"/>
        <dbReference type="EC" id="2.7.1.33"/>
    </reaction>
</comment>
<comment type="cofactor">
    <cofactor evidence="1">
        <name>NH4(+)</name>
        <dbReference type="ChEBI" id="CHEBI:28938"/>
    </cofactor>
    <cofactor evidence="1">
        <name>K(+)</name>
        <dbReference type="ChEBI" id="CHEBI:29103"/>
    </cofactor>
    <text evidence="1">A monovalent cation. Ammonium or potassium.</text>
</comment>
<comment type="pathway">
    <text evidence="1">Cofactor biosynthesis; coenzyme A biosynthesis; CoA from (R)-pantothenate: step 1/5.</text>
</comment>
<comment type="subunit">
    <text evidence="1">Homodimer.</text>
</comment>
<comment type="subcellular location">
    <subcellularLocation>
        <location evidence="1">Cytoplasm</location>
    </subcellularLocation>
</comment>
<comment type="similarity">
    <text evidence="1">Belongs to the type III pantothenate kinase family.</text>
</comment>
<accession>Q3JEM4</accession>
<dbReference type="EC" id="2.7.1.33" evidence="1"/>
<dbReference type="EMBL" id="CP000127">
    <property type="protein sequence ID" value="ABA56722.1"/>
    <property type="molecule type" value="Genomic_DNA"/>
</dbReference>
<dbReference type="RefSeq" id="WP_002812326.1">
    <property type="nucleotide sequence ID" value="NC_007484.1"/>
</dbReference>
<dbReference type="SMR" id="Q3JEM4"/>
<dbReference type="STRING" id="323261.Noc_0189"/>
<dbReference type="KEGG" id="noc:Noc_0189"/>
<dbReference type="eggNOG" id="COG1521">
    <property type="taxonomic scope" value="Bacteria"/>
</dbReference>
<dbReference type="HOGENOM" id="CLU_066627_0_0_6"/>
<dbReference type="InParanoid" id="Q3JEM4"/>
<dbReference type="UniPathway" id="UPA00241">
    <property type="reaction ID" value="UER00352"/>
</dbReference>
<dbReference type="Proteomes" id="UP000006838">
    <property type="component" value="Chromosome"/>
</dbReference>
<dbReference type="GO" id="GO:0005737">
    <property type="term" value="C:cytoplasm"/>
    <property type="evidence" value="ECO:0007669"/>
    <property type="project" value="UniProtKB-SubCell"/>
</dbReference>
<dbReference type="GO" id="GO:0005524">
    <property type="term" value="F:ATP binding"/>
    <property type="evidence" value="ECO:0007669"/>
    <property type="project" value="UniProtKB-UniRule"/>
</dbReference>
<dbReference type="GO" id="GO:0046872">
    <property type="term" value="F:metal ion binding"/>
    <property type="evidence" value="ECO:0007669"/>
    <property type="project" value="UniProtKB-KW"/>
</dbReference>
<dbReference type="GO" id="GO:0004594">
    <property type="term" value="F:pantothenate kinase activity"/>
    <property type="evidence" value="ECO:0007669"/>
    <property type="project" value="UniProtKB-UniRule"/>
</dbReference>
<dbReference type="GO" id="GO:0015937">
    <property type="term" value="P:coenzyme A biosynthetic process"/>
    <property type="evidence" value="ECO:0007669"/>
    <property type="project" value="UniProtKB-UniRule"/>
</dbReference>
<dbReference type="CDD" id="cd24015">
    <property type="entry name" value="ASKHA_NBD_PanK-III"/>
    <property type="match status" value="1"/>
</dbReference>
<dbReference type="Gene3D" id="3.30.420.40">
    <property type="match status" value="2"/>
</dbReference>
<dbReference type="HAMAP" id="MF_01274">
    <property type="entry name" value="Pantothen_kinase_3"/>
    <property type="match status" value="1"/>
</dbReference>
<dbReference type="InterPro" id="IPR043129">
    <property type="entry name" value="ATPase_NBD"/>
</dbReference>
<dbReference type="InterPro" id="IPR004619">
    <property type="entry name" value="Type_III_PanK"/>
</dbReference>
<dbReference type="NCBIfam" id="TIGR00671">
    <property type="entry name" value="baf"/>
    <property type="match status" value="1"/>
</dbReference>
<dbReference type="NCBIfam" id="NF009866">
    <property type="entry name" value="PRK13328.1-2"/>
    <property type="match status" value="1"/>
</dbReference>
<dbReference type="PANTHER" id="PTHR34265">
    <property type="entry name" value="TYPE III PANTOTHENATE KINASE"/>
    <property type="match status" value="1"/>
</dbReference>
<dbReference type="PANTHER" id="PTHR34265:SF1">
    <property type="entry name" value="TYPE III PANTOTHENATE KINASE"/>
    <property type="match status" value="1"/>
</dbReference>
<dbReference type="Pfam" id="PF03309">
    <property type="entry name" value="Pan_kinase"/>
    <property type="match status" value="1"/>
</dbReference>
<dbReference type="SUPFAM" id="SSF53067">
    <property type="entry name" value="Actin-like ATPase domain"/>
    <property type="match status" value="2"/>
</dbReference>
<evidence type="ECO:0000255" key="1">
    <source>
        <dbReference type="HAMAP-Rule" id="MF_01274"/>
    </source>
</evidence>
<sequence>MILLVDIGNSRIKWARLDGGKPADMGAVTRGKTGIKRVLSKAWKEFGDVNRVVVANVGGPKVAEQLEQWLQTHWQIAPEFLTARSNGYGIRNAYSKPETLGIDRWLGLVAVRQRYRGGDRKKAICIVDCGTAITLDVLAADGKHLGGLIIPGLAMMPKFLADHTAGINETTEAVEYSLLASTTSAAINAGALYGAVAFIDRVSHDVAVEMKGELKFVITGGDAPRILPLLRDKYEHLPDLVLRGLARVAKDTSKVRRETDLDCAAQ</sequence>
<reference key="1">
    <citation type="journal article" date="2006" name="Appl. Environ. Microbiol.">
        <title>Complete genome sequence of the marine, chemolithoautotrophic, ammonia-oxidizing bacterium Nitrosococcus oceani ATCC 19707.</title>
        <authorList>
            <person name="Klotz M.G."/>
            <person name="Arp D.J."/>
            <person name="Chain P.S.G."/>
            <person name="El-Sheikh A.F."/>
            <person name="Hauser L.J."/>
            <person name="Hommes N.G."/>
            <person name="Larimer F.W."/>
            <person name="Malfatti S.A."/>
            <person name="Norton J.M."/>
            <person name="Poret-Peterson A.T."/>
            <person name="Vergez L.M."/>
            <person name="Ward B.B."/>
        </authorList>
    </citation>
    <scope>NUCLEOTIDE SEQUENCE [LARGE SCALE GENOMIC DNA]</scope>
    <source>
        <strain>ATCC 19707 / BCRC 17464 / JCM 30415 / NCIMB 11848 / C-107</strain>
    </source>
</reference>
<name>COAX_NITOC</name>
<protein>
    <recommendedName>
        <fullName evidence="1">Type III pantothenate kinase</fullName>
        <ecNumber evidence="1">2.7.1.33</ecNumber>
    </recommendedName>
    <alternativeName>
        <fullName evidence="1">PanK-III</fullName>
    </alternativeName>
    <alternativeName>
        <fullName evidence="1">Pantothenic acid kinase</fullName>
    </alternativeName>
</protein>
<feature type="chain" id="PRO_0000270885" description="Type III pantothenate kinase">
    <location>
        <begin position="1"/>
        <end position="266"/>
    </location>
</feature>
<feature type="active site" description="Proton acceptor" evidence="1">
    <location>
        <position position="103"/>
    </location>
</feature>
<feature type="binding site" evidence="1">
    <location>
        <begin position="6"/>
        <end position="13"/>
    </location>
    <ligand>
        <name>ATP</name>
        <dbReference type="ChEBI" id="CHEBI:30616"/>
    </ligand>
</feature>
<feature type="binding site" evidence="1">
    <location>
        <position position="94"/>
    </location>
    <ligand>
        <name>substrate</name>
    </ligand>
</feature>
<feature type="binding site" evidence="1">
    <location>
        <begin position="101"/>
        <end position="104"/>
    </location>
    <ligand>
        <name>substrate</name>
    </ligand>
</feature>
<feature type="binding site" evidence="1">
    <location>
        <position position="128"/>
    </location>
    <ligand>
        <name>K(+)</name>
        <dbReference type="ChEBI" id="CHEBI:29103"/>
    </ligand>
</feature>
<feature type="binding site" evidence="1">
    <location>
        <position position="131"/>
    </location>
    <ligand>
        <name>ATP</name>
        <dbReference type="ChEBI" id="CHEBI:30616"/>
    </ligand>
</feature>
<feature type="binding site" evidence="1">
    <location>
        <position position="183"/>
    </location>
    <ligand>
        <name>substrate</name>
    </ligand>
</feature>
<gene>
    <name evidence="1" type="primary">coaX</name>
    <name type="ordered locus">Noc_0189</name>
</gene>
<keyword id="KW-0067">ATP-binding</keyword>
<keyword id="KW-0173">Coenzyme A biosynthesis</keyword>
<keyword id="KW-0963">Cytoplasm</keyword>
<keyword id="KW-0418">Kinase</keyword>
<keyword id="KW-0479">Metal-binding</keyword>
<keyword id="KW-0547">Nucleotide-binding</keyword>
<keyword id="KW-0630">Potassium</keyword>
<keyword id="KW-1185">Reference proteome</keyword>
<keyword id="KW-0808">Transferase</keyword>